<evidence type="ECO:0000255" key="1">
    <source>
        <dbReference type="HAMAP-Rule" id="MF_00532"/>
    </source>
</evidence>
<evidence type="ECO:0000305" key="2"/>
<name>RS9_LAWIP</name>
<feature type="chain" id="PRO_1000051245" description="Small ribosomal subunit protein uS9">
    <location>
        <begin position="1"/>
        <end position="130"/>
    </location>
</feature>
<accession>Q1MQW3</accession>
<proteinExistence type="inferred from homology"/>
<sequence length="130" mass="14816">MSTEFNYATGRRKTAVARTRLYPGNGTIKINGRPLENYFPRKSLQMIIRQPLVHTKLLDKYDIKINVSGGGVSGQAEAVRHGISRALLEVNPELRSLLKPVGFLTRDARQKERKKYGLRAARAKYQYSKR</sequence>
<comment type="similarity">
    <text evidence="1">Belongs to the universal ribosomal protein uS9 family.</text>
</comment>
<gene>
    <name evidence="1" type="primary">rpsI</name>
    <name type="ordered locus">LI0560</name>
</gene>
<dbReference type="EMBL" id="AM180252">
    <property type="protein sequence ID" value="CAJ54614.1"/>
    <property type="molecule type" value="Genomic_DNA"/>
</dbReference>
<dbReference type="RefSeq" id="WP_011526643.1">
    <property type="nucleotide sequence ID" value="NC_008011.1"/>
</dbReference>
<dbReference type="SMR" id="Q1MQW3"/>
<dbReference type="STRING" id="363253.LI0560"/>
<dbReference type="KEGG" id="lip:LI0560"/>
<dbReference type="eggNOG" id="COG0103">
    <property type="taxonomic scope" value="Bacteria"/>
</dbReference>
<dbReference type="HOGENOM" id="CLU_046483_2_1_7"/>
<dbReference type="OrthoDB" id="9803965at2"/>
<dbReference type="Proteomes" id="UP000002430">
    <property type="component" value="Chromosome"/>
</dbReference>
<dbReference type="GO" id="GO:0005737">
    <property type="term" value="C:cytoplasm"/>
    <property type="evidence" value="ECO:0007669"/>
    <property type="project" value="UniProtKB-ARBA"/>
</dbReference>
<dbReference type="GO" id="GO:0015935">
    <property type="term" value="C:small ribosomal subunit"/>
    <property type="evidence" value="ECO:0007669"/>
    <property type="project" value="TreeGrafter"/>
</dbReference>
<dbReference type="GO" id="GO:0003723">
    <property type="term" value="F:RNA binding"/>
    <property type="evidence" value="ECO:0007669"/>
    <property type="project" value="TreeGrafter"/>
</dbReference>
<dbReference type="GO" id="GO:0003735">
    <property type="term" value="F:structural constituent of ribosome"/>
    <property type="evidence" value="ECO:0007669"/>
    <property type="project" value="InterPro"/>
</dbReference>
<dbReference type="GO" id="GO:0006412">
    <property type="term" value="P:translation"/>
    <property type="evidence" value="ECO:0007669"/>
    <property type="project" value="UniProtKB-UniRule"/>
</dbReference>
<dbReference type="FunFam" id="3.30.230.10:FF:000001">
    <property type="entry name" value="30S ribosomal protein S9"/>
    <property type="match status" value="1"/>
</dbReference>
<dbReference type="Gene3D" id="3.30.230.10">
    <property type="match status" value="1"/>
</dbReference>
<dbReference type="HAMAP" id="MF_00532_B">
    <property type="entry name" value="Ribosomal_uS9_B"/>
    <property type="match status" value="1"/>
</dbReference>
<dbReference type="InterPro" id="IPR020568">
    <property type="entry name" value="Ribosomal_Su5_D2-typ_SF"/>
</dbReference>
<dbReference type="InterPro" id="IPR000754">
    <property type="entry name" value="Ribosomal_uS9"/>
</dbReference>
<dbReference type="InterPro" id="IPR023035">
    <property type="entry name" value="Ribosomal_uS9_bac/plastid"/>
</dbReference>
<dbReference type="InterPro" id="IPR020574">
    <property type="entry name" value="Ribosomal_uS9_CS"/>
</dbReference>
<dbReference type="InterPro" id="IPR014721">
    <property type="entry name" value="Ribsml_uS5_D2-typ_fold_subgr"/>
</dbReference>
<dbReference type="NCBIfam" id="NF001099">
    <property type="entry name" value="PRK00132.1"/>
    <property type="match status" value="1"/>
</dbReference>
<dbReference type="PANTHER" id="PTHR21569">
    <property type="entry name" value="RIBOSOMAL PROTEIN S9"/>
    <property type="match status" value="1"/>
</dbReference>
<dbReference type="PANTHER" id="PTHR21569:SF1">
    <property type="entry name" value="SMALL RIBOSOMAL SUBUNIT PROTEIN US9M"/>
    <property type="match status" value="1"/>
</dbReference>
<dbReference type="Pfam" id="PF00380">
    <property type="entry name" value="Ribosomal_S9"/>
    <property type="match status" value="1"/>
</dbReference>
<dbReference type="SUPFAM" id="SSF54211">
    <property type="entry name" value="Ribosomal protein S5 domain 2-like"/>
    <property type="match status" value="1"/>
</dbReference>
<dbReference type="PROSITE" id="PS00360">
    <property type="entry name" value="RIBOSOMAL_S9"/>
    <property type="match status" value="1"/>
</dbReference>
<keyword id="KW-1185">Reference proteome</keyword>
<keyword id="KW-0687">Ribonucleoprotein</keyword>
<keyword id="KW-0689">Ribosomal protein</keyword>
<organism>
    <name type="scientific">Lawsonia intracellularis (strain PHE/MN1-00)</name>
    <dbReference type="NCBI Taxonomy" id="363253"/>
    <lineage>
        <taxon>Bacteria</taxon>
        <taxon>Pseudomonadati</taxon>
        <taxon>Thermodesulfobacteriota</taxon>
        <taxon>Desulfovibrionia</taxon>
        <taxon>Desulfovibrionales</taxon>
        <taxon>Desulfovibrionaceae</taxon>
        <taxon>Lawsonia</taxon>
    </lineage>
</organism>
<reference key="1">
    <citation type="submission" date="2005-11" db="EMBL/GenBank/DDBJ databases">
        <title>The complete genome sequence of Lawsonia intracellularis: the causative agent of proliferative enteropathy.</title>
        <authorList>
            <person name="Kaur K."/>
            <person name="Zhang Q."/>
            <person name="Beckler D."/>
            <person name="Munir S."/>
            <person name="Li L."/>
            <person name="Kinsley K."/>
            <person name="Herron L."/>
            <person name="Peterson A."/>
            <person name="May B."/>
            <person name="Singh S."/>
            <person name="Gebhart C."/>
            <person name="Kapur V."/>
        </authorList>
    </citation>
    <scope>NUCLEOTIDE SEQUENCE [LARGE SCALE GENOMIC DNA]</scope>
    <source>
        <strain>PHE/MN1-00</strain>
    </source>
</reference>
<protein>
    <recommendedName>
        <fullName evidence="1">Small ribosomal subunit protein uS9</fullName>
    </recommendedName>
    <alternativeName>
        <fullName evidence="2">30S ribosomal protein S9</fullName>
    </alternativeName>
</protein>